<evidence type="ECO:0000255" key="1">
    <source>
        <dbReference type="HAMAP-Rule" id="MF_00226"/>
    </source>
</evidence>
<name>CINA_CLOTE</name>
<proteinExistence type="inferred from homology"/>
<organism>
    <name type="scientific">Clostridium tetani (strain Massachusetts / E88)</name>
    <dbReference type="NCBI Taxonomy" id="212717"/>
    <lineage>
        <taxon>Bacteria</taxon>
        <taxon>Bacillati</taxon>
        <taxon>Bacillota</taxon>
        <taxon>Clostridia</taxon>
        <taxon>Eubacteriales</taxon>
        <taxon>Clostridiaceae</taxon>
        <taxon>Clostridium</taxon>
    </lineage>
</organism>
<reference key="1">
    <citation type="journal article" date="2003" name="Proc. Natl. Acad. Sci. U.S.A.">
        <title>The genome sequence of Clostridium tetani, the causative agent of tetanus disease.</title>
        <authorList>
            <person name="Brueggemann H."/>
            <person name="Baeumer S."/>
            <person name="Fricke W.F."/>
            <person name="Wiezer A."/>
            <person name="Liesegang H."/>
            <person name="Decker I."/>
            <person name="Herzberg C."/>
            <person name="Martinez-Arias R."/>
            <person name="Merkl R."/>
            <person name="Henne A."/>
            <person name="Gottschalk G."/>
        </authorList>
    </citation>
    <scope>NUCLEOTIDE SEQUENCE [LARGE SCALE GENOMIC DNA]</scope>
    <source>
        <strain>Massachusetts / E88</strain>
    </source>
</reference>
<dbReference type="EMBL" id="AE015927">
    <property type="protein sequence ID" value="AAO34994.1"/>
    <property type="molecule type" value="Genomic_DNA"/>
</dbReference>
<dbReference type="RefSeq" id="WP_011098665.1">
    <property type="nucleotide sequence ID" value="NC_004557.1"/>
</dbReference>
<dbReference type="SMR" id="Q898T5"/>
<dbReference type="STRING" id="212717.CTC_00357"/>
<dbReference type="GeneID" id="24252941"/>
<dbReference type="KEGG" id="ctc:CTC_00357"/>
<dbReference type="HOGENOM" id="CLU_030805_9_3_9"/>
<dbReference type="OrthoDB" id="9801454at2"/>
<dbReference type="Proteomes" id="UP000001412">
    <property type="component" value="Chromosome"/>
</dbReference>
<dbReference type="CDD" id="cd00885">
    <property type="entry name" value="cinA"/>
    <property type="match status" value="1"/>
</dbReference>
<dbReference type="Gene3D" id="3.30.70.2860">
    <property type="match status" value="1"/>
</dbReference>
<dbReference type="Gene3D" id="3.90.950.20">
    <property type="entry name" value="CinA-like"/>
    <property type="match status" value="1"/>
</dbReference>
<dbReference type="Gene3D" id="3.40.980.10">
    <property type="entry name" value="MoaB/Mog-like domain"/>
    <property type="match status" value="1"/>
</dbReference>
<dbReference type="HAMAP" id="MF_00226_B">
    <property type="entry name" value="CinA_B"/>
    <property type="match status" value="1"/>
</dbReference>
<dbReference type="InterPro" id="IPR050101">
    <property type="entry name" value="CinA"/>
</dbReference>
<dbReference type="InterPro" id="IPR036653">
    <property type="entry name" value="CinA-like_C"/>
</dbReference>
<dbReference type="InterPro" id="IPR008136">
    <property type="entry name" value="CinA_C"/>
</dbReference>
<dbReference type="InterPro" id="IPR041424">
    <property type="entry name" value="CinA_KH"/>
</dbReference>
<dbReference type="InterPro" id="IPR008135">
    <property type="entry name" value="Competence-induced_CinA"/>
</dbReference>
<dbReference type="InterPro" id="IPR036425">
    <property type="entry name" value="MoaB/Mog-like_dom_sf"/>
</dbReference>
<dbReference type="InterPro" id="IPR001453">
    <property type="entry name" value="MoaB/Mog_dom"/>
</dbReference>
<dbReference type="NCBIfam" id="TIGR00200">
    <property type="entry name" value="cinA_nterm"/>
    <property type="match status" value="1"/>
</dbReference>
<dbReference type="NCBIfam" id="TIGR00177">
    <property type="entry name" value="molyb_syn"/>
    <property type="match status" value="1"/>
</dbReference>
<dbReference type="NCBIfam" id="TIGR00199">
    <property type="entry name" value="PncC_domain"/>
    <property type="match status" value="1"/>
</dbReference>
<dbReference type="NCBIfam" id="NF001813">
    <property type="entry name" value="PRK00549.1"/>
    <property type="match status" value="1"/>
</dbReference>
<dbReference type="PANTHER" id="PTHR13939">
    <property type="entry name" value="NICOTINAMIDE-NUCLEOTIDE AMIDOHYDROLASE PNCC"/>
    <property type="match status" value="1"/>
</dbReference>
<dbReference type="PANTHER" id="PTHR13939:SF0">
    <property type="entry name" value="NMN AMIDOHYDROLASE-LIKE PROTEIN YFAY"/>
    <property type="match status" value="1"/>
</dbReference>
<dbReference type="Pfam" id="PF02464">
    <property type="entry name" value="CinA"/>
    <property type="match status" value="1"/>
</dbReference>
<dbReference type="Pfam" id="PF18146">
    <property type="entry name" value="CinA_KH"/>
    <property type="match status" value="1"/>
</dbReference>
<dbReference type="Pfam" id="PF00994">
    <property type="entry name" value="MoCF_biosynth"/>
    <property type="match status" value="1"/>
</dbReference>
<dbReference type="PIRSF" id="PIRSF006728">
    <property type="entry name" value="CinA"/>
    <property type="match status" value="1"/>
</dbReference>
<dbReference type="SMART" id="SM00852">
    <property type="entry name" value="MoCF_biosynth"/>
    <property type="match status" value="1"/>
</dbReference>
<dbReference type="SUPFAM" id="SSF142433">
    <property type="entry name" value="CinA-like"/>
    <property type="match status" value="1"/>
</dbReference>
<dbReference type="SUPFAM" id="SSF53218">
    <property type="entry name" value="Molybdenum cofactor biosynthesis proteins"/>
    <property type="match status" value="1"/>
</dbReference>
<sequence>MNAEIIAVGTEILLGDIVNTNAQFLSKKLAEMGISVYHQSVVGDNGNRLKEELTESFKRSNIVITTGGLGPTKDDLTKEIGAEYFNRKMFLHEESLKNIKNYFKKQGKILNENNEKQAYFPEKSTILPNNFGTAPGCIMEENDKFLIMLPGPPKEIIPMFKDYVIPYLKKFNEGVLISKVLRICGMGESKVVTEINHLIENQTNPTVAPYAKDNEVTLRLTAKAKNEKEALSLIYPLEKEIRDILGNNIYGTDSDTLEGVIGKFLIENNLYIATAESCTGGLLCGRLVNYPGISKCLVEGIVSYSNNSKMNRIGVKKETLNKFGAVSEETAIEMAKGVANSSGADIGISTTGIAGPSGGTYEKPVGLVYIGYYIKGKSFAKKFIFPGDRQSMRNKTVTVALDYLRKNLI</sequence>
<feature type="chain" id="PRO_0000156756" description="Putative competence-damage inducible protein">
    <location>
        <begin position="1"/>
        <end position="409"/>
    </location>
</feature>
<protein>
    <recommendedName>
        <fullName evidence="1">Putative competence-damage inducible protein</fullName>
    </recommendedName>
</protein>
<accession>Q898T5</accession>
<comment type="similarity">
    <text evidence="1">Belongs to the CinA family.</text>
</comment>
<keyword id="KW-1185">Reference proteome</keyword>
<gene>
    <name evidence="1" type="primary">cinA</name>
    <name type="ordered locus">CTC_00357</name>
</gene>